<keyword id="KW-0963">Cytoplasm</keyword>
<keyword id="KW-0206">Cytoskeleton</keyword>
<keyword id="KW-0342">GTP-binding</keyword>
<keyword id="KW-0460">Magnesium</keyword>
<keyword id="KW-0479">Metal-binding</keyword>
<keyword id="KW-0493">Microtubule</keyword>
<keyword id="KW-0547">Nucleotide-binding</keyword>
<accession>O44388</accession>
<reference key="1">
    <citation type="journal article" date="1999" name="Mol. Biochem. Parasitol.">
        <title>A beta-tubulin gene from Trichuris trichiura.</title>
        <authorList>
            <person name="Bennett A.B."/>
            <person name="Barker G.C."/>
            <person name="Bundy D.A.P."/>
        </authorList>
    </citation>
    <scope>NUCLEOTIDE SEQUENCE [GENOMIC DNA]</scope>
</reference>
<feature type="chain" id="PRO_0000260089" description="Tubulin beta chain">
    <location>
        <begin position="1"/>
        <end position="444"/>
    </location>
</feature>
<feature type="binding site" evidence="2">
    <location>
        <position position="11"/>
    </location>
    <ligand>
        <name>GTP</name>
        <dbReference type="ChEBI" id="CHEBI:37565"/>
    </ligand>
</feature>
<feature type="binding site" evidence="1">
    <location>
        <position position="69"/>
    </location>
    <ligand>
        <name>GTP</name>
        <dbReference type="ChEBI" id="CHEBI:37565"/>
    </ligand>
</feature>
<feature type="binding site" evidence="1">
    <location>
        <position position="69"/>
    </location>
    <ligand>
        <name>Mg(2+)</name>
        <dbReference type="ChEBI" id="CHEBI:18420"/>
    </ligand>
</feature>
<feature type="binding site" evidence="2">
    <location>
        <position position="138"/>
    </location>
    <ligand>
        <name>GTP</name>
        <dbReference type="ChEBI" id="CHEBI:37565"/>
    </ligand>
</feature>
<feature type="binding site" evidence="2">
    <location>
        <position position="142"/>
    </location>
    <ligand>
        <name>GTP</name>
        <dbReference type="ChEBI" id="CHEBI:37565"/>
    </ligand>
</feature>
<feature type="binding site" evidence="2">
    <location>
        <position position="143"/>
    </location>
    <ligand>
        <name>GTP</name>
        <dbReference type="ChEBI" id="CHEBI:37565"/>
    </ligand>
</feature>
<feature type="binding site" evidence="2">
    <location>
        <position position="144"/>
    </location>
    <ligand>
        <name>GTP</name>
        <dbReference type="ChEBI" id="CHEBI:37565"/>
    </ligand>
</feature>
<feature type="binding site" evidence="2">
    <location>
        <position position="204"/>
    </location>
    <ligand>
        <name>GTP</name>
        <dbReference type="ChEBI" id="CHEBI:37565"/>
    </ligand>
</feature>
<feature type="binding site" evidence="2">
    <location>
        <position position="226"/>
    </location>
    <ligand>
        <name>GTP</name>
        <dbReference type="ChEBI" id="CHEBI:37565"/>
    </ligand>
</feature>
<dbReference type="EMBL" id="AF034219">
    <property type="protein sequence ID" value="AAB99949.1"/>
    <property type="molecule type" value="Genomic_DNA"/>
</dbReference>
<dbReference type="SMR" id="O44388"/>
<dbReference type="GO" id="GO:0005737">
    <property type="term" value="C:cytoplasm"/>
    <property type="evidence" value="ECO:0007669"/>
    <property type="project" value="UniProtKB-KW"/>
</dbReference>
<dbReference type="GO" id="GO:0005874">
    <property type="term" value="C:microtubule"/>
    <property type="evidence" value="ECO:0007669"/>
    <property type="project" value="UniProtKB-KW"/>
</dbReference>
<dbReference type="GO" id="GO:0005525">
    <property type="term" value="F:GTP binding"/>
    <property type="evidence" value="ECO:0007669"/>
    <property type="project" value="UniProtKB-KW"/>
</dbReference>
<dbReference type="GO" id="GO:0003924">
    <property type="term" value="F:GTPase activity"/>
    <property type="evidence" value="ECO:0007669"/>
    <property type="project" value="InterPro"/>
</dbReference>
<dbReference type="GO" id="GO:0046872">
    <property type="term" value="F:metal ion binding"/>
    <property type="evidence" value="ECO:0007669"/>
    <property type="project" value="UniProtKB-KW"/>
</dbReference>
<dbReference type="GO" id="GO:0005200">
    <property type="term" value="F:structural constituent of cytoskeleton"/>
    <property type="evidence" value="ECO:0007669"/>
    <property type="project" value="InterPro"/>
</dbReference>
<dbReference type="GO" id="GO:0007017">
    <property type="term" value="P:microtubule-based process"/>
    <property type="evidence" value="ECO:0007669"/>
    <property type="project" value="InterPro"/>
</dbReference>
<dbReference type="CDD" id="cd02187">
    <property type="entry name" value="beta_tubulin"/>
    <property type="match status" value="1"/>
</dbReference>
<dbReference type="FunFam" id="1.10.287.600:FF:000002">
    <property type="entry name" value="Tubulin beta chain"/>
    <property type="match status" value="1"/>
</dbReference>
<dbReference type="FunFam" id="3.30.1330.20:FF:000002">
    <property type="entry name" value="Tubulin beta chain"/>
    <property type="match status" value="1"/>
</dbReference>
<dbReference type="FunFam" id="3.40.50.1440:FF:000003">
    <property type="entry name" value="Tubulin beta chain"/>
    <property type="match status" value="1"/>
</dbReference>
<dbReference type="Gene3D" id="1.10.287.600">
    <property type="entry name" value="Helix hairpin bin"/>
    <property type="match status" value="1"/>
</dbReference>
<dbReference type="Gene3D" id="3.30.1330.20">
    <property type="entry name" value="Tubulin/FtsZ, C-terminal domain"/>
    <property type="match status" value="1"/>
</dbReference>
<dbReference type="Gene3D" id="3.40.50.1440">
    <property type="entry name" value="Tubulin/FtsZ, GTPase domain"/>
    <property type="match status" value="1"/>
</dbReference>
<dbReference type="InterPro" id="IPR013838">
    <property type="entry name" value="Beta-tubulin_BS"/>
</dbReference>
<dbReference type="InterPro" id="IPR002453">
    <property type="entry name" value="Beta_tubulin"/>
</dbReference>
<dbReference type="InterPro" id="IPR008280">
    <property type="entry name" value="Tub_FtsZ_C"/>
</dbReference>
<dbReference type="InterPro" id="IPR000217">
    <property type="entry name" value="Tubulin"/>
</dbReference>
<dbReference type="InterPro" id="IPR037103">
    <property type="entry name" value="Tubulin/FtsZ-like_C"/>
</dbReference>
<dbReference type="InterPro" id="IPR018316">
    <property type="entry name" value="Tubulin/FtsZ_2-layer-sand-dom"/>
</dbReference>
<dbReference type="InterPro" id="IPR036525">
    <property type="entry name" value="Tubulin/FtsZ_GTPase_sf"/>
</dbReference>
<dbReference type="InterPro" id="IPR023123">
    <property type="entry name" value="Tubulin_C"/>
</dbReference>
<dbReference type="InterPro" id="IPR017975">
    <property type="entry name" value="Tubulin_CS"/>
</dbReference>
<dbReference type="InterPro" id="IPR003008">
    <property type="entry name" value="Tubulin_FtsZ_GTPase"/>
</dbReference>
<dbReference type="PANTHER" id="PTHR11588">
    <property type="entry name" value="TUBULIN"/>
    <property type="match status" value="1"/>
</dbReference>
<dbReference type="Pfam" id="PF00091">
    <property type="entry name" value="Tubulin"/>
    <property type="match status" value="1"/>
</dbReference>
<dbReference type="Pfam" id="PF03953">
    <property type="entry name" value="Tubulin_C"/>
    <property type="match status" value="1"/>
</dbReference>
<dbReference type="PRINTS" id="PR01163">
    <property type="entry name" value="BETATUBULIN"/>
</dbReference>
<dbReference type="PRINTS" id="PR01161">
    <property type="entry name" value="TUBULIN"/>
</dbReference>
<dbReference type="SMART" id="SM00864">
    <property type="entry name" value="Tubulin"/>
    <property type="match status" value="1"/>
</dbReference>
<dbReference type="SMART" id="SM00865">
    <property type="entry name" value="Tubulin_C"/>
    <property type="match status" value="1"/>
</dbReference>
<dbReference type="SUPFAM" id="SSF55307">
    <property type="entry name" value="Tubulin C-terminal domain-like"/>
    <property type="match status" value="1"/>
</dbReference>
<dbReference type="SUPFAM" id="SSF52490">
    <property type="entry name" value="Tubulin nucleotide-binding domain-like"/>
    <property type="match status" value="1"/>
</dbReference>
<dbReference type="PROSITE" id="PS00227">
    <property type="entry name" value="TUBULIN"/>
    <property type="match status" value="1"/>
</dbReference>
<dbReference type="PROSITE" id="PS00228">
    <property type="entry name" value="TUBULIN_B_AUTOREG"/>
    <property type="match status" value="1"/>
</dbReference>
<organism>
    <name type="scientific">Trichuris trichiura</name>
    <name type="common">Whipworm</name>
    <name type="synonym">Trichocephalus trichiurus</name>
    <dbReference type="NCBI Taxonomy" id="36087"/>
    <lineage>
        <taxon>Eukaryota</taxon>
        <taxon>Metazoa</taxon>
        <taxon>Ecdysozoa</taxon>
        <taxon>Nematoda</taxon>
        <taxon>Enoplea</taxon>
        <taxon>Dorylaimia</taxon>
        <taxon>Trichinellida</taxon>
        <taxon>Trichuridae</taxon>
        <taxon>Trichuris</taxon>
    </lineage>
</organism>
<sequence length="444" mass="49848">MREIVHIQAGQCGNQIGAKFWEVISDEHGIDPTGTYHGDSDLQLERINVYYNEASGGKYVPRAILVDLEPGTMDSVRAGPFGTLFRPDNFIFGQSGAGNNWAKGHYTEGAELVDNVLDVVRKESESCDCLQGFQLTHSLGGGTGSGMGTLLISKIREEYPDRIMTTFSVVPSPKVSDTVVEPYNATLSVHQLVENTDETFCIDNEALYDICFRTLKLTTPTYGDLNHLVSATMSGVTTCLRFPGQLNADLRKLAVNMVPFPRLHFFMPGFAPLTSRGSQGYRALTVPELTQQMFDAKNMMAACDPRHGRYLTVAAIFRGRMSMKEVDEQMLNVQNKNNAYFVEWIPNNVKTAVCDIPPRGLKMSATFIGNSTAIQELFKRISEQFTAMFRRKAFLHWYTGEGMDEMEFTEAESNMNDLVSEYQQYQEATVEDEDFEEEGDYERE</sequence>
<name>TBB_TRITR</name>
<evidence type="ECO:0000250" key="1">
    <source>
        <dbReference type="UniProtKB" id="P68363"/>
    </source>
</evidence>
<evidence type="ECO:0000250" key="2">
    <source>
        <dbReference type="UniProtKB" id="Q13509"/>
    </source>
</evidence>
<evidence type="ECO:0000305" key="3"/>
<proteinExistence type="inferred from homology"/>
<comment type="function">
    <text>Tubulin is the major constituent of microtubules, a cylinder consisting of laterally associated linear protofilaments composed of alpha- and beta-tubulin heterodimers. Microtubules grow by the addition of GTP-tubulin dimers to the microtubule end, where a stabilizing cap forms. Below the cap, tubulin dimers are in GDP-bound state, owing to GTPase activity of alpha-tubulin.</text>
</comment>
<comment type="cofactor">
    <cofactor evidence="1">
        <name>Mg(2+)</name>
        <dbReference type="ChEBI" id="CHEBI:18420"/>
    </cofactor>
</comment>
<comment type="subunit">
    <text>Dimer of alpha and beta chains. A typical microtubule is a hollow water-filled tube with an outer diameter of 25 nm and an inner diameter of 15 nM. Alpha-beta heterodimers associate head-to-tail to form protofilaments running lengthwise along the microtubule wall with the beta-tubulin subunit facing the microtubule plus end conferring a structural polarity. Microtubules usually have 13 protofilaments but different protofilament numbers can be found in some organisms and specialized cells.</text>
</comment>
<comment type="subcellular location">
    <subcellularLocation>
        <location>Cytoplasm</location>
        <location>Cytoskeleton</location>
    </subcellularLocation>
</comment>
<comment type="similarity">
    <text evidence="3">Belongs to the tubulin family.</text>
</comment>
<protein>
    <recommendedName>
        <fullName>Tubulin beta chain</fullName>
    </recommendedName>
    <alternativeName>
        <fullName>Beta-tubulin</fullName>
    </alternativeName>
</protein>